<reference key="1">
    <citation type="journal article" date="2008" name="J. Bacteriol.">
        <title>Genome sequence of a nephritogenic and highly transformable M49 strain of Streptococcus pyogenes.</title>
        <authorList>
            <person name="McShan W.M."/>
            <person name="Ferretti J.J."/>
            <person name="Karasawa T."/>
            <person name="Suvorov A.N."/>
            <person name="Lin S."/>
            <person name="Qin B."/>
            <person name="Jia H."/>
            <person name="Kenton S."/>
            <person name="Najar F."/>
            <person name="Wu H."/>
            <person name="Scott J."/>
            <person name="Roe B.A."/>
            <person name="Savic D.J."/>
        </authorList>
    </citation>
    <scope>NUCLEOTIDE SEQUENCE [LARGE SCALE GENOMIC DNA]</scope>
    <source>
        <strain>NZ131</strain>
    </source>
</reference>
<sequence length="213" mass="23369">MKLLLFITIAYLLGSIPTGLWIGQYFYHINLREHGSGNTGTTNTFRILGVKAGTATLAIDMFKGTLSILLPIIFGMTSISSIAIGFFAVLGHTFPIFANFKGGKAVATSAGVLLGFAPLYLFFLASIFVLVLYLFSMISLASVVSAIVGVLSVLTFPAIHFLLPNYDYFLTFIVILLAFIIIIRHKDNISRIKHHTENLIPWGLNLSKQVPKK</sequence>
<protein>
    <recommendedName>
        <fullName evidence="1">Glycerol-3-phosphate acyltransferase</fullName>
    </recommendedName>
    <alternativeName>
        <fullName evidence="1">Acyl-PO4 G3P acyltransferase</fullName>
    </alternativeName>
    <alternativeName>
        <fullName evidence="1">Acyl-phosphate--glycerol-3-phosphate acyltransferase</fullName>
    </alternativeName>
    <alternativeName>
        <fullName evidence="1">G3P acyltransferase</fullName>
        <shortName evidence="1">GPAT</shortName>
        <ecNumber evidence="1">2.3.1.275</ecNumber>
    </alternativeName>
    <alternativeName>
        <fullName evidence="1">Lysophosphatidic acid synthase</fullName>
        <shortName evidence="1">LPA synthase</shortName>
    </alternativeName>
</protein>
<comment type="function">
    <text evidence="1">Catalyzes the transfer of an acyl group from acyl-phosphate (acyl-PO(4)) to glycerol-3-phosphate (G3P) to form lysophosphatidic acid (LPA). This enzyme utilizes acyl-phosphate as fatty acyl donor, but not acyl-CoA or acyl-ACP.</text>
</comment>
<comment type="catalytic activity">
    <reaction evidence="1">
        <text>an acyl phosphate + sn-glycerol 3-phosphate = a 1-acyl-sn-glycero-3-phosphate + phosphate</text>
        <dbReference type="Rhea" id="RHEA:34075"/>
        <dbReference type="ChEBI" id="CHEBI:43474"/>
        <dbReference type="ChEBI" id="CHEBI:57597"/>
        <dbReference type="ChEBI" id="CHEBI:57970"/>
        <dbReference type="ChEBI" id="CHEBI:59918"/>
        <dbReference type="EC" id="2.3.1.275"/>
    </reaction>
</comment>
<comment type="pathway">
    <text evidence="1">Lipid metabolism; phospholipid metabolism.</text>
</comment>
<comment type="subunit">
    <text evidence="1">Probably interacts with PlsX.</text>
</comment>
<comment type="subcellular location">
    <subcellularLocation>
        <location evidence="1">Cell membrane</location>
        <topology evidence="1">Multi-pass membrane protein</topology>
    </subcellularLocation>
</comment>
<comment type="similarity">
    <text evidence="1">Belongs to the PlsY family.</text>
</comment>
<dbReference type="EC" id="2.3.1.275" evidence="1"/>
<dbReference type="EMBL" id="CP000829">
    <property type="protein sequence ID" value="ACI61034.1"/>
    <property type="molecule type" value="Genomic_DNA"/>
</dbReference>
<dbReference type="SMR" id="B5XL22"/>
<dbReference type="KEGG" id="soz:Spy49_0719c"/>
<dbReference type="HOGENOM" id="CLU_081254_3_0_9"/>
<dbReference type="UniPathway" id="UPA00085"/>
<dbReference type="Proteomes" id="UP000001039">
    <property type="component" value="Chromosome"/>
</dbReference>
<dbReference type="GO" id="GO:0005886">
    <property type="term" value="C:plasma membrane"/>
    <property type="evidence" value="ECO:0007669"/>
    <property type="project" value="UniProtKB-SubCell"/>
</dbReference>
<dbReference type="GO" id="GO:0043772">
    <property type="term" value="F:acyl-phosphate glycerol-3-phosphate acyltransferase activity"/>
    <property type="evidence" value="ECO:0007669"/>
    <property type="project" value="UniProtKB-UniRule"/>
</dbReference>
<dbReference type="GO" id="GO:0008654">
    <property type="term" value="P:phospholipid biosynthetic process"/>
    <property type="evidence" value="ECO:0007669"/>
    <property type="project" value="UniProtKB-UniRule"/>
</dbReference>
<dbReference type="HAMAP" id="MF_01043">
    <property type="entry name" value="PlsY"/>
    <property type="match status" value="1"/>
</dbReference>
<dbReference type="InterPro" id="IPR003811">
    <property type="entry name" value="G3P_acylTferase_PlsY"/>
</dbReference>
<dbReference type="NCBIfam" id="TIGR00023">
    <property type="entry name" value="glycerol-3-phosphate 1-O-acyltransferase PlsY"/>
    <property type="match status" value="1"/>
</dbReference>
<dbReference type="PANTHER" id="PTHR30309:SF0">
    <property type="entry name" value="GLYCEROL-3-PHOSPHATE ACYLTRANSFERASE-RELATED"/>
    <property type="match status" value="1"/>
</dbReference>
<dbReference type="PANTHER" id="PTHR30309">
    <property type="entry name" value="INNER MEMBRANE PROTEIN YGIH"/>
    <property type="match status" value="1"/>
</dbReference>
<dbReference type="Pfam" id="PF02660">
    <property type="entry name" value="G3P_acyltransf"/>
    <property type="match status" value="1"/>
</dbReference>
<dbReference type="SMART" id="SM01207">
    <property type="entry name" value="G3P_acyltransf"/>
    <property type="match status" value="1"/>
</dbReference>
<keyword id="KW-1003">Cell membrane</keyword>
<keyword id="KW-0444">Lipid biosynthesis</keyword>
<keyword id="KW-0443">Lipid metabolism</keyword>
<keyword id="KW-0472">Membrane</keyword>
<keyword id="KW-0594">Phospholipid biosynthesis</keyword>
<keyword id="KW-1208">Phospholipid metabolism</keyword>
<keyword id="KW-0808">Transferase</keyword>
<keyword id="KW-0812">Transmembrane</keyword>
<keyword id="KW-1133">Transmembrane helix</keyword>
<name>PLSY_STRPZ</name>
<evidence type="ECO:0000255" key="1">
    <source>
        <dbReference type="HAMAP-Rule" id="MF_01043"/>
    </source>
</evidence>
<organism>
    <name type="scientific">Streptococcus pyogenes serotype M49 (strain NZ131)</name>
    <dbReference type="NCBI Taxonomy" id="471876"/>
    <lineage>
        <taxon>Bacteria</taxon>
        <taxon>Bacillati</taxon>
        <taxon>Bacillota</taxon>
        <taxon>Bacilli</taxon>
        <taxon>Lactobacillales</taxon>
        <taxon>Streptococcaceae</taxon>
        <taxon>Streptococcus</taxon>
    </lineage>
</organism>
<gene>
    <name evidence="1" type="primary">plsY</name>
    <name type="ordered locus">Spy49_0719c</name>
</gene>
<proteinExistence type="inferred from homology"/>
<accession>B5XL22</accession>
<feature type="chain" id="PRO_1000136128" description="Glycerol-3-phosphate acyltransferase">
    <location>
        <begin position="1"/>
        <end position="213"/>
    </location>
</feature>
<feature type="transmembrane region" description="Helical" evidence="1">
    <location>
        <begin position="3"/>
        <end position="23"/>
    </location>
</feature>
<feature type="transmembrane region" description="Helical" evidence="1">
    <location>
        <begin position="68"/>
        <end position="88"/>
    </location>
</feature>
<feature type="transmembrane region" description="Helical" evidence="1">
    <location>
        <begin position="112"/>
        <end position="132"/>
    </location>
</feature>
<feature type="transmembrane region" description="Helical" evidence="1">
    <location>
        <begin position="134"/>
        <end position="154"/>
    </location>
</feature>
<feature type="transmembrane region" description="Helical" evidence="1">
    <location>
        <begin position="163"/>
        <end position="183"/>
    </location>
</feature>